<keyword id="KW-1185">Reference proteome</keyword>
<keyword id="KW-0687">Ribonucleoprotein</keyword>
<keyword id="KW-0689">Ribosomal protein</keyword>
<keyword id="KW-0694">RNA-binding</keyword>
<keyword id="KW-0699">rRNA-binding</keyword>
<sequence>MSRIGKKILEIPAGVTITVAEDNTVTVKGPKGELTRTFNADMLIKIEENTLTVERPSEQKEHRALHGTTRALIGNMVEGVTEGFARGLELVGVGYRAQKQGDKLVLSVGYSHPVEMTPEAGLEVEVPAPTKIVIKGIDKQRVGEFAANIRAVRAPEPYKGKGIRYEGEVVRRKEGKTAK</sequence>
<reference key="1">
    <citation type="journal article" date="2003" name="Nature">
        <title>The genome sequence of Bacillus anthracis Ames and comparison to closely related bacteria.</title>
        <authorList>
            <person name="Read T.D."/>
            <person name="Peterson S.N."/>
            <person name="Tourasse N.J."/>
            <person name="Baillie L.W."/>
            <person name="Paulsen I.T."/>
            <person name="Nelson K.E."/>
            <person name="Tettelin H."/>
            <person name="Fouts D.E."/>
            <person name="Eisen J.A."/>
            <person name="Gill S.R."/>
            <person name="Holtzapple E.K."/>
            <person name="Okstad O.A."/>
            <person name="Helgason E."/>
            <person name="Rilstone J."/>
            <person name="Wu M."/>
            <person name="Kolonay J.F."/>
            <person name="Beanan M.J."/>
            <person name="Dodson R.J."/>
            <person name="Brinkac L.M."/>
            <person name="Gwinn M.L."/>
            <person name="DeBoy R.T."/>
            <person name="Madpu R."/>
            <person name="Daugherty S.C."/>
            <person name="Durkin A.S."/>
            <person name="Haft D.H."/>
            <person name="Nelson W.C."/>
            <person name="Peterson J.D."/>
            <person name="Pop M."/>
            <person name="Khouri H.M."/>
            <person name="Radune D."/>
            <person name="Benton J.L."/>
            <person name="Mahamoud Y."/>
            <person name="Jiang L."/>
            <person name="Hance I.R."/>
            <person name="Weidman J.F."/>
            <person name="Berry K.J."/>
            <person name="Plaut R.D."/>
            <person name="Wolf A.M."/>
            <person name="Watkins K.L."/>
            <person name="Nierman W.C."/>
            <person name="Hazen A."/>
            <person name="Cline R.T."/>
            <person name="Redmond C."/>
            <person name="Thwaite J.E."/>
            <person name="White O."/>
            <person name="Salzberg S.L."/>
            <person name="Thomason B."/>
            <person name="Friedlander A.M."/>
            <person name="Koehler T.M."/>
            <person name="Hanna P.C."/>
            <person name="Kolstoe A.-B."/>
            <person name="Fraser C.M."/>
        </authorList>
    </citation>
    <scope>NUCLEOTIDE SEQUENCE [LARGE SCALE GENOMIC DNA]</scope>
    <source>
        <strain>Ames / isolate Porton</strain>
    </source>
</reference>
<reference key="2">
    <citation type="submission" date="2004-01" db="EMBL/GenBank/DDBJ databases">
        <title>Complete genome sequence of Bacillus anthracis Sterne.</title>
        <authorList>
            <person name="Brettin T.S."/>
            <person name="Bruce D."/>
            <person name="Challacombe J.F."/>
            <person name="Gilna P."/>
            <person name="Han C."/>
            <person name="Hill K."/>
            <person name="Hitchcock P."/>
            <person name="Jackson P."/>
            <person name="Keim P."/>
            <person name="Longmire J."/>
            <person name="Lucas S."/>
            <person name="Okinaka R."/>
            <person name="Richardson P."/>
            <person name="Rubin E."/>
            <person name="Tice H."/>
        </authorList>
    </citation>
    <scope>NUCLEOTIDE SEQUENCE [LARGE SCALE GENOMIC DNA]</scope>
    <source>
        <strain>Sterne</strain>
    </source>
</reference>
<reference key="3">
    <citation type="journal article" date="2009" name="J. Bacteriol.">
        <title>The complete genome sequence of Bacillus anthracis Ames 'Ancestor'.</title>
        <authorList>
            <person name="Ravel J."/>
            <person name="Jiang L."/>
            <person name="Stanley S.T."/>
            <person name="Wilson M.R."/>
            <person name="Decker R.S."/>
            <person name="Read T.D."/>
            <person name="Worsham P."/>
            <person name="Keim P.S."/>
            <person name="Salzberg S.L."/>
            <person name="Fraser-Liggett C.M."/>
            <person name="Rasko D.A."/>
        </authorList>
    </citation>
    <scope>NUCLEOTIDE SEQUENCE [LARGE SCALE GENOMIC DNA]</scope>
    <source>
        <strain>Ames ancestor</strain>
    </source>
</reference>
<gene>
    <name evidence="1" type="primary">rplF</name>
    <name type="ordered locus">BA_0125</name>
    <name type="ordered locus">GBAA_0125</name>
    <name type="ordered locus">BAS0125</name>
</gene>
<proteinExistence type="inferred from homology"/>
<protein>
    <recommendedName>
        <fullName evidence="1">Large ribosomal subunit protein uL6</fullName>
    </recommendedName>
    <alternativeName>
        <fullName evidence="2">50S ribosomal protein L6</fullName>
    </alternativeName>
</protein>
<dbReference type="EMBL" id="AE016879">
    <property type="protein sequence ID" value="AAP24179.1"/>
    <property type="molecule type" value="Genomic_DNA"/>
</dbReference>
<dbReference type="EMBL" id="AE017225">
    <property type="protein sequence ID" value="AAT52462.1"/>
    <property type="molecule type" value="Genomic_DNA"/>
</dbReference>
<dbReference type="EMBL" id="AE017334">
    <property type="protein sequence ID" value="AAT29205.1"/>
    <property type="molecule type" value="Genomic_DNA"/>
</dbReference>
<dbReference type="RefSeq" id="NP_842693.1">
    <property type="nucleotide sequence ID" value="NC_003997.3"/>
</dbReference>
<dbReference type="RefSeq" id="WP_000086558.1">
    <property type="nucleotide sequence ID" value="NZ_WXXJ01000051.1"/>
</dbReference>
<dbReference type="RefSeq" id="YP_026411.1">
    <property type="nucleotide sequence ID" value="NC_005945.1"/>
</dbReference>
<dbReference type="SMR" id="Q81VR5"/>
<dbReference type="STRING" id="261594.GBAA_0125"/>
<dbReference type="DNASU" id="1087011"/>
<dbReference type="GeneID" id="93010928"/>
<dbReference type="KEGG" id="ban:BA_0125"/>
<dbReference type="KEGG" id="bar:GBAA_0125"/>
<dbReference type="KEGG" id="bat:BAS0125"/>
<dbReference type="PATRIC" id="fig|198094.11.peg.122"/>
<dbReference type="eggNOG" id="COG0097">
    <property type="taxonomic scope" value="Bacteria"/>
</dbReference>
<dbReference type="HOGENOM" id="CLU_065464_1_2_9"/>
<dbReference type="OMA" id="RERHGLC"/>
<dbReference type="OrthoDB" id="9805007at2"/>
<dbReference type="Proteomes" id="UP000000427">
    <property type="component" value="Chromosome"/>
</dbReference>
<dbReference type="Proteomes" id="UP000000594">
    <property type="component" value="Chromosome"/>
</dbReference>
<dbReference type="GO" id="GO:0022625">
    <property type="term" value="C:cytosolic large ribosomal subunit"/>
    <property type="evidence" value="ECO:0007669"/>
    <property type="project" value="TreeGrafter"/>
</dbReference>
<dbReference type="GO" id="GO:0019843">
    <property type="term" value="F:rRNA binding"/>
    <property type="evidence" value="ECO:0007669"/>
    <property type="project" value="UniProtKB-UniRule"/>
</dbReference>
<dbReference type="GO" id="GO:0003735">
    <property type="term" value="F:structural constituent of ribosome"/>
    <property type="evidence" value="ECO:0007669"/>
    <property type="project" value="InterPro"/>
</dbReference>
<dbReference type="GO" id="GO:0002181">
    <property type="term" value="P:cytoplasmic translation"/>
    <property type="evidence" value="ECO:0007669"/>
    <property type="project" value="TreeGrafter"/>
</dbReference>
<dbReference type="FunFam" id="3.90.930.12:FF:000001">
    <property type="entry name" value="50S ribosomal protein L6"/>
    <property type="match status" value="1"/>
</dbReference>
<dbReference type="FunFam" id="3.90.930.12:FF:000002">
    <property type="entry name" value="50S ribosomal protein L6"/>
    <property type="match status" value="1"/>
</dbReference>
<dbReference type="Gene3D" id="3.90.930.12">
    <property type="entry name" value="Ribosomal protein L6, alpha-beta domain"/>
    <property type="match status" value="2"/>
</dbReference>
<dbReference type="HAMAP" id="MF_01365_B">
    <property type="entry name" value="Ribosomal_uL6_B"/>
    <property type="match status" value="1"/>
</dbReference>
<dbReference type="InterPro" id="IPR000702">
    <property type="entry name" value="Ribosomal_uL6-like"/>
</dbReference>
<dbReference type="InterPro" id="IPR036789">
    <property type="entry name" value="Ribosomal_uL6-like_a/b-dom_sf"/>
</dbReference>
<dbReference type="InterPro" id="IPR020040">
    <property type="entry name" value="Ribosomal_uL6_a/b-dom"/>
</dbReference>
<dbReference type="InterPro" id="IPR019906">
    <property type="entry name" value="Ribosomal_uL6_bac-type"/>
</dbReference>
<dbReference type="InterPro" id="IPR002358">
    <property type="entry name" value="Ribosomal_uL6_CS"/>
</dbReference>
<dbReference type="NCBIfam" id="TIGR03654">
    <property type="entry name" value="L6_bact"/>
    <property type="match status" value="1"/>
</dbReference>
<dbReference type="PANTHER" id="PTHR11655">
    <property type="entry name" value="60S/50S RIBOSOMAL PROTEIN L6/L9"/>
    <property type="match status" value="1"/>
</dbReference>
<dbReference type="PANTHER" id="PTHR11655:SF14">
    <property type="entry name" value="LARGE RIBOSOMAL SUBUNIT PROTEIN UL6M"/>
    <property type="match status" value="1"/>
</dbReference>
<dbReference type="Pfam" id="PF00347">
    <property type="entry name" value="Ribosomal_L6"/>
    <property type="match status" value="2"/>
</dbReference>
<dbReference type="PIRSF" id="PIRSF002162">
    <property type="entry name" value="Ribosomal_L6"/>
    <property type="match status" value="1"/>
</dbReference>
<dbReference type="PRINTS" id="PR00059">
    <property type="entry name" value="RIBOSOMALL6"/>
</dbReference>
<dbReference type="SUPFAM" id="SSF56053">
    <property type="entry name" value="Ribosomal protein L6"/>
    <property type="match status" value="2"/>
</dbReference>
<dbReference type="PROSITE" id="PS00525">
    <property type="entry name" value="RIBOSOMAL_L6_1"/>
    <property type="match status" value="1"/>
</dbReference>
<name>RL6_BACAN</name>
<feature type="chain" id="PRO_0000260838" description="Large ribosomal subunit protein uL6">
    <location>
        <begin position="1"/>
        <end position="179"/>
    </location>
</feature>
<evidence type="ECO:0000255" key="1">
    <source>
        <dbReference type="HAMAP-Rule" id="MF_01365"/>
    </source>
</evidence>
<evidence type="ECO:0000305" key="2"/>
<comment type="function">
    <text evidence="1">This protein binds to the 23S rRNA, and is important in its secondary structure. It is located near the subunit interface in the base of the L7/L12 stalk, and near the tRNA binding site of the peptidyltransferase center.</text>
</comment>
<comment type="subunit">
    <text evidence="1">Part of the 50S ribosomal subunit.</text>
</comment>
<comment type="similarity">
    <text evidence="1">Belongs to the universal ribosomal protein uL6 family.</text>
</comment>
<accession>Q81VR5</accession>
<accession>Q6I4R9</accession>
<accession>Q6KYG5</accession>
<organism>
    <name type="scientific">Bacillus anthracis</name>
    <dbReference type="NCBI Taxonomy" id="1392"/>
    <lineage>
        <taxon>Bacteria</taxon>
        <taxon>Bacillati</taxon>
        <taxon>Bacillota</taxon>
        <taxon>Bacilli</taxon>
        <taxon>Bacillales</taxon>
        <taxon>Bacillaceae</taxon>
        <taxon>Bacillus</taxon>
        <taxon>Bacillus cereus group</taxon>
    </lineage>
</organism>